<comment type="function">
    <text evidence="1">Catalyzes the aldol cleavage of 4-hydroxy-4-methyl-2-oxoglutarate (HMG) into 2 molecules of pyruvate. Also contains a secondary oxaloacetate (OAA) decarboxylase activity due to the common pyruvate enolate transition state formed following C-C bond cleavage in the retro-aldol and decarboxylation reactions (By similarity).</text>
</comment>
<comment type="catalytic activity">
    <reaction>
        <text>4-hydroxy-4-methyl-2-oxoglutarate = 2 pyruvate</text>
        <dbReference type="Rhea" id="RHEA:22748"/>
        <dbReference type="ChEBI" id="CHEBI:15361"/>
        <dbReference type="ChEBI" id="CHEBI:58276"/>
        <dbReference type="EC" id="4.1.3.17"/>
    </reaction>
</comment>
<comment type="catalytic activity">
    <reaction>
        <text>oxaloacetate + H(+) = pyruvate + CO2</text>
        <dbReference type="Rhea" id="RHEA:15641"/>
        <dbReference type="ChEBI" id="CHEBI:15361"/>
        <dbReference type="ChEBI" id="CHEBI:15378"/>
        <dbReference type="ChEBI" id="CHEBI:16452"/>
        <dbReference type="ChEBI" id="CHEBI:16526"/>
        <dbReference type="EC" id="4.1.1.112"/>
    </reaction>
</comment>
<comment type="cofactor">
    <cofactor evidence="1">
        <name>a divalent metal cation</name>
        <dbReference type="ChEBI" id="CHEBI:60240"/>
    </cofactor>
    <text evidence="1">Divalent metal cation.</text>
</comment>
<comment type="subunit">
    <text evidence="1">Homotrimer.</text>
</comment>
<comment type="similarity">
    <text evidence="2">Belongs to the class II aldolase/RraA-like family.</text>
</comment>
<dbReference type="EC" id="4.1.3.17"/>
<dbReference type="EC" id="4.1.1.112"/>
<dbReference type="EMBL" id="CR378664">
    <property type="protein sequence ID" value="CAG18972.1"/>
    <property type="molecule type" value="Genomic_DNA"/>
</dbReference>
<dbReference type="RefSeq" id="WP_006230626.1">
    <property type="nucleotide sequence ID" value="NC_006370.1"/>
</dbReference>
<dbReference type="SMR" id="Q6LUQ3"/>
<dbReference type="STRING" id="298386.PBPRA0549"/>
<dbReference type="KEGG" id="ppr:PBPRA0549"/>
<dbReference type="eggNOG" id="COG0684">
    <property type="taxonomic scope" value="Bacteria"/>
</dbReference>
<dbReference type="HOGENOM" id="CLU_072626_4_0_6"/>
<dbReference type="Proteomes" id="UP000000593">
    <property type="component" value="Chromosome 1"/>
</dbReference>
<dbReference type="GO" id="GO:0047443">
    <property type="term" value="F:4-hydroxy-4-methyl-2-oxoglutarate aldolase activity"/>
    <property type="evidence" value="ECO:0007669"/>
    <property type="project" value="UniProtKB-EC"/>
</dbReference>
<dbReference type="GO" id="GO:0046872">
    <property type="term" value="F:metal ion binding"/>
    <property type="evidence" value="ECO:0007669"/>
    <property type="project" value="UniProtKB-KW"/>
</dbReference>
<dbReference type="GO" id="GO:0008948">
    <property type="term" value="F:oxaloacetate decarboxylase activity"/>
    <property type="evidence" value="ECO:0007669"/>
    <property type="project" value="UniProtKB-EC"/>
</dbReference>
<dbReference type="GO" id="GO:0008428">
    <property type="term" value="F:ribonuclease inhibitor activity"/>
    <property type="evidence" value="ECO:0007669"/>
    <property type="project" value="InterPro"/>
</dbReference>
<dbReference type="GO" id="GO:0051252">
    <property type="term" value="P:regulation of RNA metabolic process"/>
    <property type="evidence" value="ECO:0007669"/>
    <property type="project" value="InterPro"/>
</dbReference>
<dbReference type="CDD" id="cd16841">
    <property type="entry name" value="RraA_family"/>
    <property type="match status" value="1"/>
</dbReference>
<dbReference type="Gene3D" id="3.50.30.40">
    <property type="entry name" value="Ribonuclease E inhibitor RraA/RraA-like"/>
    <property type="match status" value="1"/>
</dbReference>
<dbReference type="InterPro" id="IPR010203">
    <property type="entry name" value="RraA"/>
</dbReference>
<dbReference type="InterPro" id="IPR005493">
    <property type="entry name" value="RraA/RraA-like"/>
</dbReference>
<dbReference type="InterPro" id="IPR036704">
    <property type="entry name" value="RraA/RraA-like_sf"/>
</dbReference>
<dbReference type="NCBIfam" id="TIGR01935">
    <property type="entry name" value="NOT-MenG"/>
    <property type="match status" value="1"/>
</dbReference>
<dbReference type="NCBIfam" id="NF006875">
    <property type="entry name" value="PRK09372.1"/>
    <property type="match status" value="1"/>
</dbReference>
<dbReference type="NCBIfam" id="NF009134">
    <property type="entry name" value="PRK12487.1"/>
    <property type="match status" value="1"/>
</dbReference>
<dbReference type="PANTHER" id="PTHR33254">
    <property type="entry name" value="4-HYDROXY-4-METHYL-2-OXOGLUTARATE ALDOLASE 3-RELATED"/>
    <property type="match status" value="1"/>
</dbReference>
<dbReference type="PANTHER" id="PTHR33254:SF4">
    <property type="entry name" value="4-HYDROXY-4-METHYL-2-OXOGLUTARATE ALDOLASE 3-RELATED"/>
    <property type="match status" value="1"/>
</dbReference>
<dbReference type="Pfam" id="PF03737">
    <property type="entry name" value="RraA-like"/>
    <property type="match status" value="1"/>
</dbReference>
<dbReference type="SUPFAM" id="SSF89562">
    <property type="entry name" value="RraA-like"/>
    <property type="match status" value="1"/>
</dbReference>
<keyword id="KW-0456">Lyase</keyword>
<keyword id="KW-0479">Metal-binding</keyword>
<keyword id="KW-1185">Reference proteome</keyword>
<sequence length="163" mass="17840">MNDLLPDLCDHYEQDVRWLPLVLNDYGGKKIFYGEVVTLRCFEDNSLVRDIVSQDGTGKVLFIDGHASYNGALLGDQLALLAVKNGWQGIVINGTARDVGTLATLDLGVKALGTCPYKTVKRQTGDMNVTMTVAHTMIYPGDYLYADLNGILLSKQSLDLSVL</sequence>
<protein>
    <recommendedName>
        <fullName>Putative 4-hydroxy-4-methyl-2-oxoglutarate aldolase</fullName>
        <shortName>HMG aldolase</shortName>
        <ecNumber>4.1.3.17</ecNumber>
    </recommendedName>
    <alternativeName>
        <fullName>Oxaloacetate decarboxylase</fullName>
        <shortName>OAA decarboxylase</shortName>
        <ecNumber>4.1.1.112</ecNumber>
    </alternativeName>
    <alternativeName>
        <fullName>Regulator of ribonuclease activity homolog</fullName>
    </alternativeName>
    <alternativeName>
        <fullName>RraA-like protein</fullName>
    </alternativeName>
</protein>
<organism>
    <name type="scientific">Photobacterium profundum (strain SS9)</name>
    <dbReference type="NCBI Taxonomy" id="298386"/>
    <lineage>
        <taxon>Bacteria</taxon>
        <taxon>Pseudomonadati</taxon>
        <taxon>Pseudomonadota</taxon>
        <taxon>Gammaproteobacteria</taxon>
        <taxon>Vibrionales</taxon>
        <taxon>Vibrionaceae</taxon>
        <taxon>Photobacterium</taxon>
    </lineage>
</organism>
<evidence type="ECO:0000250" key="1"/>
<evidence type="ECO:0000305" key="2"/>
<reference key="1">
    <citation type="journal article" date="2005" name="Science">
        <title>Life at depth: Photobacterium profundum genome sequence and expression analysis.</title>
        <authorList>
            <person name="Vezzi A."/>
            <person name="Campanaro S."/>
            <person name="D'Angelo M."/>
            <person name="Simonato F."/>
            <person name="Vitulo N."/>
            <person name="Lauro F.M."/>
            <person name="Cestaro A."/>
            <person name="Malacrida G."/>
            <person name="Simionati B."/>
            <person name="Cannata N."/>
            <person name="Romualdi C."/>
            <person name="Bartlett D.H."/>
            <person name="Valle G."/>
        </authorList>
    </citation>
    <scope>NUCLEOTIDE SEQUENCE [LARGE SCALE GENOMIC DNA]</scope>
    <source>
        <strain>ATCC BAA-1253 / SS9</strain>
    </source>
</reference>
<feature type="chain" id="PRO_0000209628" description="Putative 4-hydroxy-4-methyl-2-oxoglutarate aldolase">
    <location>
        <begin position="1"/>
        <end position="163"/>
    </location>
</feature>
<feature type="binding site" evidence="1">
    <location>
        <begin position="75"/>
        <end position="78"/>
    </location>
    <ligand>
        <name>substrate</name>
    </ligand>
</feature>
<feature type="binding site" evidence="1">
    <location>
        <position position="97"/>
    </location>
    <ligand>
        <name>substrate</name>
    </ligand>
</feature>
<feature type="binding site" evidence="1">
    <location>
        <position position="98"/>
    </location>
    <ligand>
        <name>a divalent metal cation</name>
        <dbReference type="ChEBI" id="CHEBI:60240"/>
    </ligand>
</feature>
<proteinExistence type="inferred from homology"/>
<accession>Q6LUQ3</accession>
<gene>
    <name type="ordered locus">PBPRA0549</name>
</gene>
<name>RRAAH_PHOPR</name>